<organism>
    <name type="scientific">Rattus norvegicus</name>
    <name type="common">Rat</name>
    <dbReference type="NCBI Taxonomy" id="10116"/>
    <lineage>
        <taxon>Eukaryota</taxon>
        <taxon>Metazoa</taxon>
        <taxon>Chordata</taxon>
        <taxon>Craniata</taxon>
        <taxon>Vertebrata</taxon>
        <taxon>Euteleostomi</taxon>
        <taxon>Mammalia</taxon>
        <taxon>Eutheria</taxon>
        <taxon>Euarchontoglires</taxon>
        <taxon>Glires</taxon>
        <taxon>Rodentia</taxon>
        <taxon>Myomorpha</taxon>
        <taxon>Muroidea</taxon>
        <taxon>Muridae</taxon>
        <taxon>Murinae</taxon>
        <taxon>Rattus</taxon>
    </lineage>
</organism>
<reference key="1">
    <citation type="journal article" date="1985" name="Gene">
        <title>Molecular cloning and nucleotide sequences of cDNAs specific for rat liver ribosomal proteins S17 and L30.</title>
        <authorList>
            <person name="Nakanishi O."/>
            <person name="Oyanagi M."/>
            <person name="Kuwano Y."/>
            <person name="Tanaka T."/>
            <person name="Nakayama T."/>
            <person name="Mitsui H."/>
            <person name="Nabeshima Y."/>
            <person name="Ogata K."/>
        </authorList>
    </citation>
    <scope>NUCLEOTIDE SEQUENCE [MRNA]</scope>
    <scope>PROTEIN SEQUENCE OF N-TERMINUS</scope>
</reference>
<reference key="2">
    <citation type="journal article" date="2004" name="Genome Res.">
        <title>The status, quality, and expansion of the NIH full-length cDNA project: the Mammalian Gene Collection (MGC).</title>
        <authorList>
            <consortium name="The MGC Project Team"/>
        </authorList>
    </citation>
    <scope>NUCLEOTIDE SEQUENCE [LARGE SCALE MRNA]</scope>
    <source>
        <tissue>Pituitary</tissue>
    </source>
</reference>
<feature type="chain" id="PRO_0000141528" description="Small ribosomal subunit protein eS17">
    <location>
        <begin position="1"/>
        <end position="135"/>
    </location>
</feature>
<feature type="modified residue" description="N6-succinyllysine" evidence="2">
    <location>
        <position position="19"/>
    </location>
</feature>
<feature type="modified residue" description="Phosphoserine" evidence="1">
    <location>
        <position position="113"/>
    </location>
</feature>
<feature type="modified residue" description="Phosphothreonine" evidence="1">
    <location>
        <position position="130"/>
    </location>
</feature>
<feature type="cross-link" description="Glycyl lysine isopeptide (Lys-Gly) (interchain with G-Cter in SUMO1); alternate" evidence="1">
    <location>
        <position position="103"/>
    </location>
</feature>
<feature type="cross-link" description="Glycyl lysine isopeptide (Lys-Gly) (interchain with G-Cter in SUMO2); alternate" evidence="1">
    <location>
        <position position="103"/>
    </location>
</feature>
<feature type="sequence conflict" description="In Ref. 1; AAA42078." evidence="3" ref="1">
    <original>E</original>
    <variation>K</variation>
    <location>
        <position position="36"/>
    </location>
</feature>
<name>RS17_RAT</name>
<dbReference type="EMBL" id="K02933">
    <property type="protein sequence ID" value="AAA42078.1"/>
    <property type="molecule type" value="mRNA"/>
</dbReference>
<dbReference type="EMBL" id="BC058484">
    <property type="protein sequence ID" value="AAH58484.1"/>
    <property type="molecule type" value="mRNA"/>
</dbReference>
<dbReference type="PIR" id="A24028">
    <property type="entry name" value="R4RT17"/>
</dbReference>
<dbReference type="RefSeq" id="NP_058848.2">
    <property type="nucleotide sequence ID" value="NM_017152.3"/>
</dbReference>
<dbReference type="RefSeq" id="XP_006226597.1">
    <property type="nucleotide sequence ID" value="XM_006226535.3"/>
</dbReference>
<dbReference type="RefSeq" id="XP_006243666.1">
    <property type="nucleotide sequence ID" value="XM_006243604.2"/>
</dbReference>
<dbReference type="PDB" id="7QGG">
    <property type="method" value="EM"/>
    <property type="resolution" value="2.86 A"/>
    <property type="chains" value="SR=1-135"/>
</dbReference>
<dbReference type="PDBsum" id="7QGG"/>
<dbReference type="EMDB" id="EMD-13954"/>
<dbReference type="SMR" id="P04644"/>
<dbReference type="BioGRID" id="247956">
    <property type="interactions" value="2"/>
</dbReference>
<dbReference type="FunCoup" id="P04644">
    <property type="interactions" value="2572"/>
</dbReference>
<dbReference type="IntAct" id="P04644">
    <property type="interactions" value="2"/>
</dbReference>
<dbReference type="MINT" id="P04644"/>
<dbReference type="STRING" id="10116.ENSRNOP00000064320"/>
<dbReference type="iPTMnet" id="P04644"/>
<dbReference type="PhosphoSitePlus" id="P04644"/>
<dbReference type="jPOST" id="P04644"/>
<dbReference type="PaxDb" id="10116-ENSRNOP00000025888"/>
<dbReference type="Ensembl" id="ENSRNOT00000073068.2">
    <property type="protein sequence ID" value="ENSRNOP00000064320.1"/>
    <property type="gene ID" value="ENSRNOG00000045885.2"/>
</dbReference>
<dbReference type="Ensembl" id="ENSRNOT00000100646.1">
    <property type="protein sequence ID" value="ENSRNOP00000096874.1"/>
    <property type="gene ID" value="ENSRNOG00000019106.8"/>
</dbReference>
<dbReference type="GeneID" id="29286"/>
<dbReference type="KEGG" id="rno:29286"/>
<dbReference type="UCSC" id="RGD:62027">
    <property type="organism name" value="rat"/>
</dbReference>
<dbReference type="AGR" id="RGD:62027"/>
<dbReference type="CTD" id="6218"/>
<dbReference type="RGD" id="62027">
    <property type="gene designation" value="Rps17"/>
</dbReference>
<dbReference type="eggNOG" id="KOG0187">
    <property type="taxonomic scope" value="Eukaryota"/>
</dbReference>
<dbReference type="GeneTree" id="ENSGT00390000006548"/>
<dbReference type="HOGENOM" id="CLU_112958_1_1_1"/>
<dbReference type="InParanoid" id="P04644"/>
<dbReference type="OMA" id="CHAETEK"/>
<dbReference type="OrthoDB" id="1727351at2759"/>
<dbReference type="PhylomeDB" id="P04644"/>
<dbReference type="TreeFam" id="TF317992"/>
<dbReference type="Reactome" id="R-RNO-156827">
    <property type="pathway name" value="L13a-mediated translational silencing of Ceruloplasmin expression"/>
</dbReference>
<dbReference type="Reactome" id="R-RNO-1799339">
    <property type="pathway name" value="SRP-dependent cotranslational protein targeting to membrane"/>
</dbReference>
<dbReference type="Reactome" id="R-RNO-6791226">
    <property type="pathway name" value="Major pathway of rRNA processing in the nucleolus and cytosol"/>
</dbReference>
<dbReference type="Reactome" id="R-RNO-72649">
    <property type="pathway name" value="Translation initiation complex formation"/>
</dbReference>
<dbReference type="Reactome" id="R-RNO-72689">
    <property type="pathway name" value="Formation of a pool of free 40S subunits"/>
</dbReference>
<dbReference type="Reactome" id="R-RNO-72695">
    <property type="pathway name" value="Formation of the ternary complex, and subsequently, the 43S complex"/>
</dbReference>
<dbReference type="Reactome" id="R-RNO-72702">
    <property type="pathway name" value="Ribosomal scanning and start codon recognition"/>
</dbReference>
<dbReference type="Reactome" id="R-RNO-72706">
    <property type="pathway name" value="GTP hydrolysis and joining of the 60S ribosomal subunit"/>
</dbReference>
<dbReference type="Reactome" id="R-RNO-975956">
    <property type="pathway name" value="Nonsense Mediated Decay (NMD) independent of the Exon Junction Complex (EJC)"/>
</dbReference>
<dbReference type="Reactome" id="R-RNO-975957">
    <property type="pathway name" value="Nonsense Mediated Decay (NMD) enhanced by the Exon Junction Complex (EJC)"/>
</dbReference>
<dbReference type="PRO" id="PR:P04644"/>
<dbReference type="Proteomes" id="UP000002494">
    <property type="component" value="Chromosome 1"/>
</dbReference>
<dbReference type="Proteomes" id="UP000002494">
    <property type="component" value="Chromosome 8"/>
</dbReference>
<dbReference type="Bgee" id="ENSRNOG00000045885">
    <property type="expression patterns" value="Expressed in pancreas and 18 other cell types or tissues"/>
</dbReference>
<dbReference type="GO" id="GO:0098556">
    <property type="term" value="C:cytoplasmic side of rough endoplasmic reticulum membrane"/>
    <property type="evidence" value="ECO:0000266"/>
    <property type="project" value="RGD"/>
</dbReference>
<dbReference type="GO" id="GO:0022626">
    <property type="term" value="C:cytosolic ribosome"/>
    <property type="evidence" value="ECO:0000266"/>
    <property type="project" value="RGD"/>
</dbReference>
<dbReference type="GO" id="GO:0022627">
    <property type="term" value="C:cytosolic small ribosomal subunit"/>
    <property type="evidence" value="ECO:0000314"/>
    <property type="project" value="RGD"/>
</dbReference>
<dbReference type="GO" id="GO:0005730">
    <property type="term" value="C:nucleolus"/>
    <property type="evidence" value="ECO:0007669"/>
    <property type="project" value="UniProtKB-SubCell"/>
</dbReference>
<dbReference type="GO" id="GO:0032040">
    <property type="term" value="C:small-subunit processome"/>
    <property type="evidence" value="ECO:0000250"/>
    <property type="project" value="UniProtKB"/>
</dbReference>
<dbReference type="GO" id="GO:0045202">
    <property type="term" value="C:synapse"/>
    <property type="evidence" value="ECO:0000266"/>
    <property type="project" value="RGD"/>
</dbReference>
<dbReference type="GO" id="GO:0003735">
    <property type="term" value="F:structural constituent of ribosome"/>
    <property type="evidence" value="ECO:0000266"/>
    <property type="project" value="RGD"/>
</dbReference>
<dbReference type="GO" id="GO:0034101">
    <property type="term" value="P:erythrocyte homeostasis"/>
    <property type="evidence" value="ECO:0000266"/>
    <property type="project" value="RGD"/>
</dbReference>
<dbReference type="GO" id="GO:0042274">
    <property type="term" value="P:ribosomal small subunit biogenesis"/>
    <property type="evidence" value="ECO:0000250"/>
    <property type="project" value="UniProtKB"/>
</dbReference>
<dbReference type="GO" id="GO:0006364">
    <property type="term" value="P:rRNA processing"/>
    <property type="evidence" value="ECO:0000266"/>
    <property type="project" value="RGD"/>
</dbReference>
<dbReference type="GO" id="GO:0006412">
    <property type="term" value="P:translation"/>
    <property type="evidence" value="ECO:0007669"/>
    <property type="project" value="InterPro"/>
</dbReference>
<dbReference type="FunFam" id="1.10.60.20:FF:000001">
    <property type="entry name" value="40S ribosomal protein S17"/>
    <property type="match status" value="1"/>
</dbReference>
<dbReference type="Gene3D" id="1.10.60.20">
    <property type="entry name" value="Ribosomal protein S17e-like"/>
    <property type="match status" value="1"/>
</dbReference>
<dbReference type="HAMAP" id="MF_00511">
    <property type="entry name" value="Ribosomal_eS17"/>
    <property type="match status" value="1"/>
</dbReference>
<dbReference type="InterPro" id="IPR001210">
    <property type="entry name" value="Ribosomal_eS17"/>
</dbReference>
<dbReference type="InterPro" id="IPR018273">
    <property type="entry name" value="Ribosomal_eS17_CS"/>
</dbReference>
<dbReference type="InterPro" id="IPR036401">
    <property type="entry name" value="Ribosomal_eS17_sf"/>
</dbReference>
<dbReference type="NCBIfam" id="NF002242">
    <property type="entry name" value="PRK01151.1"/>
    <property type="match status" value="1"/>
</dbReference>
<dbReference type="PANTHER" id="PTHR10732">
    <property type="entry name" value="40S RIBOSOMAL PROTEIN S17"/>
    <property type="match status" value="1"/>
</dbReference>
<dbReference type="PANTHER" id="PTHR10732:SF0">
    <property type="entry name" value="40S RIBOSOMAL PROTEIN S17"/>
    <property type="match status" value="1"/>
</dbReference>
<dbReference type="Pfam" id="PF00833">
    <property type="entry name" value="Ribosomal_S17e"/>
    <property type="match status" value="1"/>
</dbReference>
<dbReference type="SUPFAM" id="SSF116820">
    <property type="entry name" value="Rps17e-like"/>
    <property type="match status" value="1"/>
</dbReference>
<dbReference type="PROSITE" id="PS00712">
    <property type="entry name" value="RIBOSOMAL_S17E"/>
    <property type="match status" value="1"/>
</dbReference>
<evidence type="ECO:0000250" key="1">
    <source>
        <dbReference type="UniProtKB" id="P08708"/>
    </source>
</evidence>
<evidence type="ECO:0000250" key="2">
    <source>
        <dbReference type="UniProtKB" id="P63276"/>
    </source>
</evidence>
<evidence type="ECO:0000305" key="3"/>
<proteinExistence type="evidence at protein level"/>
<gene>
    <name type="primary">Rps17</name>
</gene>
<sequence length="135" mass="15510">MGRVRTKTVKKAARVIIEKYYTRLGNDFHTNKRVCEEIAIIPSKNLRNKIAGYVTHLMKRIQRGPVRGISIKLQEEERERRDNYVPEVSALDQEIIEVDPDTKEMLKLLDFGSLSNLQVTQPTVGMNFKTPRGAV</sequence>
<comment type="function">
    <text evidence="1">Component of the small ribosomal subunit. The ribosome is a large ribonucleoprotein complex responsible for the synthesis of proteins in the cell. Part of the small subunit (SSU) processome, first precursor of the small eukaryotic ribosomal subunit. During the assembly of the SSU processome in the nucleolus, many ribosome biogenesis factors, an RNA chaperone and ribosomal proteins associate with the nascent pre-rRNA and work in concert to generate RNA folding, modifications, rearrangements and cleavage as well as targeted degradation of pre-ribosomal RNA by the RNA exosome.</text>
</comment>
<comment type="subunit">
    <text evidence="1">Component of the small ribosomal subunit. Part of the small subunit (SSU) processome, composed of more than 70 proteins and the RNA chaperone small nucleolar RNA (snoRNA) U3.</text>
</comment>
<comment type="subcellular location">
    <subcellularLocation>
        <location evidence="1">Cytoplasm</location>
    </subcellularLocation>
    <subcellularLocation>
        <location evidence="1">Nucleus</location>
        <location evidence="1">Nucleolus</location>
    </subcellularLocation>
</comment>
<comment type="PTM">
    <text evidence="1">Ubiquitinated at Lys-103 by RNF14 and RNF25 in response to ribosome collisions (ribosome stalling).</text>
</comment>
<comment type="similarity">
    <text evidence="3">Belongs to the eukaryotic ribosomal protein eS17 family.</text>
</comment>
<keyword id="KW-0002">3D-structure</keyword>
<keyword id="KW-0963">Cytoplasm</keyword>
<keyword id="KW-0903">Direct protein sequencing</keyword>
<keyword id="KW-1017">Isopeptide bond</keyword>
<keyword id="KW-0539">Nucleus</keyword>
<keyword id="KW-0597">Phosphoprotein</keyword>
<keyword id="KW-1185">Reference proteome</keyword>
<keyword id="KW-0687">Ribonucleoprotein</keyword>
<keyword id="KW-0689">Ribosomal protein</keyword>
<keyword id="KW-0832">Ubl conjugation</keyword>
<protein>
    <recommendedName>
        <fullName evidence="3">Small ribosomal subunit protein eS17</fullName>
    </recommendedName>
    <alternativeName>
        <fullName>40S ribosomal protein S17</fullName>
    </alternativeName>
</protein>
<accession>P04644</accession>
<accession>Q6PDV2</accession>